<accession>A6VAD3</accession>
<proteinExistence type="inferred from homology"/>
<gene>
    <name evidence="1" type="primary">cysZ</name>
    <name type="ordered locus">PSPA7_4674</name>
</gene>
<reference key="1">
    <citation type="submission" date="2007-06" db="EMBL/GenBank/DDBJ databases">
        <authorList>
            <person name="Dodson R.J."/>
            <person name="Harkins D."/>
            <person name="Paulsen I.T."/>
        </authorList>
    </citation>
    <scope>NUCLEOTIDE SEQUENCE [LARGE SCALE GENOMIC DNA]</scope>
    <source>
        <strain>DSM 24068 / PA7</strain>
    </source>
</reference>
<sequence>MPALSGPQYLGEGLKLIMRPGLRLFVLIPLSINLLVFALLIGFAMQQFSHWVDLLMPSLPDWLGFLQYIVWPLFVLLVLVIVFFTFTMVANIISAPFNGFLSEKVEVVVRGRDDFPPFSWAELLAMIPRTMGREMRKLAYFLPRALVLLVLSFVPGVNLVATPLWILFGIWMMAVQYIDYPADNHKLGWNEMLAWLRSKRWACMGFGGMTYLALLIPLVNLVMMPAAVAGATLFWVREEGEKALVR</sequence>
<keyword id="KW-0028">Amino-acid biosynthesis</keyword>
<keyword id="KW-0997">Cell inner membrane</keyword>
<keyword id="KW-1003">Cell membrane</keyword>
<keyword id="KW-0198">Cysteine biosynthesis</keyword>
<keyword id="KW-0472">Membrane</keyword>
<keyword id="KW-0764">Sulfate transport</keyword>
<keyword id="KW-0812">Transmembrane</keyword>
<keyword id="KW-1133">Transmembrane helix</keyword>
<keyword id="KW-0813">Transport</keyword>
<dbReference type="EMBL" id="CP000744">
    <property type="protein sequence ID" value="ABR86505.1"/>
    <property type="molecule type" value="Genomic_DNA"/>
</dbReference>
<dbReference type="RefSeq" id="WP_012076979.1">
    <property type="nucleotide sequence ID" value="NC_009656.1"/>
</dbReference>
<dbReference type="SMR" id="A6VAD3"/>
<dbReference type="KEGG" id="pap:PSPA7_4674"/>
<dbReference type="HOGENOM" id="CLU_070331_1_0_6"/>
<dbReference type="Proteomes" id="UP000001582">
    <property type="component" value="Chromosome"/>
</dbReference>
<dbReference type="GO" id="GO:0005886">
    <property type="term" value="C:plasma membrane"/>
    <property type="evidence" value="ECO:0007669"/>
    <property type="project" value="UniProtKB-SubCell"/>
</dbReference>
<dbReference type="GO" id="GO:0009675">
    <property type="term" value="F:high-affinity sulfate:proton symporter activity"/>
    <property type="evidence" value="ECO:0007669"/>
    <property type="project" value="TreeGrafter"/>
</dbReference>
<dbReference type="GO" id="GO:0019344">
    <property type="term" value="P:cysteine biosynthetic process"/>
    <property type="evidence" value="ECO:0007669"/>
    <property type="project" value="UniProtKB-UniRule"/>
</dbReference>
<dbReference type="GO" id="GO:0000103">
    <property type="term" value="P:sulfate assimilation"/>
    <property type="evidence" value="ECO:0007669"/>
    <property type="project" value="InterPro"/>
</dbReference>
<dbReference type="HAMAP" id="MF_00468">
    <property type="entry name" value="CysZ"/>
    <property type="match status" value="1"/>
</dbReference>
<dbReference type="InterPro" id="IPR050480">
    <property type="entry name" value="CysZ_sulfate_transptr"/>
</dbReference>
<dbReference type="InterPro" id="IPR022985">
    <property type="entry name" value="Sulfate_CysZ"/>
</dbReference>
<dbReference type="NCBIfam" id="NF003433">
    <property type="entry name" value="PRK04949.1"/>
    <property type="match status" value="1"/>
</dbReference>
<dbReference type="PANTHER" id="PTHR37468">
    <property type="entry name" value="SULFATE TRANSPORTER CYSZ"/>
    <property type="match status" value="1"/>
</dbReference>
<dbReference type="PANTHER" id="PTHR37468:SF1">
    <property type="entry name" value="SULFATE TRANSPORTER CYSZ"/>
    <property type="match status" value="1"/>
</dbReference>
<dbReference type="Pfam" id="PF07264">
    <property type="entry name" value="EI24"/>
    <property type="match status" value="1"/>
</dbReference>
<protein>
    <recommendedName>
        <fullName evidence="1">Sulfate transporter CysZ</fullName>
    </recommendedName>
</protein>
<comment type="function">
    <text evidence="1">High affinity, high specificity proton-dependent sulfate transporter, which mediates sulfate uptake. Provides the sulfur source for the cysteine synthesis pathway.</text>
</comment>
<comment type="subcellular location">
    <subcellularLocation>
        <location evidence="1">Cell inner membrane</location>
        <topology evidence="1">Multi-pass membrane protein</topology>
    </subcellularLocation>
</comment>
<comment type="similarity">
    <text evidence="1">Belongs to the CysZ family.</text>
</comment>
<organism>
    <name type="scientific">Pseudomonas paraeruginosa (strain DSM 24068 / PA7)</name>
    <name type="common">Pseudomonas aeruginosa (strain PA7)</name>
    <dbReference type="NCBI Taxonomy" id="381754"/>
    <lineage>
        <taxon>Bacteria</taxon>
        <taxon>Pseudomonadati</taxon>
        <taxon>Pseudomonadota</taxon>
        <taxon>Gammaproteobacteria</taxon>
        <taxon>Pseudomonadales</taxon>
        <taxon>Pseudomonadaceae</taxon>
        <taxon>Pseudomonas</taxon>
        <taxon>Pseudomonas paraeruginosa</taxon>
    </lineage>
</organism>
<feature type="chain" id="PRO_1000060363" description="Sulfate transporter CysZ">
    <location>
        <begin position="1"/>
        <end position="246"/>
    </location>
</feature>
<feature type="transmembrane region" description="Helical" evidence="1">
    <location>
        <begin position="24"/>
        <end position="44"/>
    </location>
</feature>
<feature type="transmembrane region" description="Helical" evidence="1">
    <location>
        <begin position="69"/>
        <end position="89"/>
    </location>
</feature>
<feature type="transmembrane region" description="Helical" evidence="1">
    <location>
        <begin position="148"/>
        <end position="168"/>
    </location>
</feature>
<feature type="transmembrane region" description="Helical" evidence="1">
    <location>
        <begin position="214"/>
        <end position="234"/>
    </location>
</feature>
<name>CYSZ_PSEP7</name>
<evidence type="ECO:0000255" key="1">
    <source>
        <dbReference type="HAMAP-Rule" id="MF_00468"/>
    </source>
</evidence>